<evidence type="ECO:0000255" key="1">
    <source>
        <dbReference type="HAMAP-Rule" id="MF_01394"/>
    </source>
</evidence>
<keyword id="KW-0997">Cell inner membrane</keyword>
<keyword id="KW-1003">Cell membrane</keyword>
<keyword id="KW-0472">Membrane</keyword>
<keyword id="KW-0520">NAD</keyword>
<keyword id="KW-0874">Quinone</keyword>
<keyword id="KW-1278">Translocase</keyword>
<keyword id="KW-0812">Transmembrane</keyword>
<keyword id="KW-1133">Transmembrane helix</keyword>
<keyword id="KW-0813">Transport</keyword>
<keyword id="KW-0830">Ubiquinone</keyword>
<reference key="1">
    <citation type="submission" date="2006-03" db="EMBL/GenBank/DDBJ databases">
        <title>Complete sequence of Rhodopseudomonas palustris BisB5.</title>
        <authorList>
            <consortium name="US DOE Joint Genome Institute"/>
            <person name="Copeland A."/>
            <person name="Lucas S."/>
            <person name="Lapidus A."/>
            <person name="Barry K."/>
            <person name="Detter J.C."/>
            <person name="Glavina del Rio T."/>
            <person name="Hammon N."/>
            <person name="Israni S."/>
            <person name="Dalin E."/>
            <person name="Tice H."/>
            <person name="Pitluck S."/>
            <person name="Chain P."/>
            <person name="Malfatti S."/>
            <person name="Shin M."/>
            <person name="Vergez L."/>
            <person name="Schmutz J."/>
            <person name="Larimer F."/>
            <person name="Land M."/>
            <person name="Hauser L."/>
            <person name="Pelletier D.A."/>
            <person name="Kyrpides N."/>
            <person name="Lykidis A."/>
            <person name="Oda Y."/>
            <person name="Harwood C.S."/>
            <person name="Richardson P."/>
        </authorList>
    </citation>
    <scope>NUCLEOTIDE SEQUENCE [LARGE SCALE GENOMIC DNA]</scope>
    <source>
        <strain>BisB5</strain>
    </source>
</reference>
<accession>Q13BH5</accession>
<protein>
    <recommendedName>
        <fullName evidence="1">NADH-quinone oxidoreductase subunit A</fullName>
        <ecNumber evidence="1">7.1.1.-</ecNumber>
    </recommendedName>
    <alternativeName>
        <fullName evidence="1">NADH dehydrogenase I subunit A</fullName>
    </alternativeName>
    <alternativeName>
        <fullName evidence="1">NDH-1 subunit A</fullName>
    </alternativeName>
    <alternativeName>
        <fullName evidence="1">NUO1</fullName>
    </alternativeName>
</protein>
<organism>
    <name type="scientific">Rhodopseudomonas palustris (strain BisB5)</name>
    <dbReference type="NCBI Taxonomy" id="316057"/>
    <lineage>
        <taxon>Bacteria</taxon>
        <taxon>Pseudomonadati</taxon>
        <taxon>Pseudomonadota</taxon>
        <taxon>Alphaproteobacteria</taxon>
        <taxon>Hyphomicrobiales</taxon>
        <taxon>Nitrobacteraceae</taxon>
        <taxon>Rhodopseudomonas</taxon>
    </lineage>
</organism>
<feature type="chain" id="PRO_0000362758" description="NADH-quinone oxidoreductase subunit A">
    <location>
        <begin position="1"/>
        <end position="129"/>
    </location>
</feature>
<feature type="transmembrane region" description="Helical" evidence="1">
    <location>
        <begin position="14"/>
        <end position="34"/>
    </location>
</feature>
<feature type="transmembrane region" description="Helical" evidence="1">
    <location>
        <begin position="67"/>
        <end position="87"/>
    </location>
</feature>
<feature type="transmembrane region" description="Helical" evidence="1">
    <location>
        <begin position="95"/>
        <end position="115"/>
    </location>
</feature>
<comment type="function">
    <text evidence="1">NDH-1 shuttles electrons from NADH, via FMN and iron-sulfur (Fe-S) centers, to quinones in the respiratory chain. The immediate electron acceptor for the enzyme in this species is believed to be ubiquinone. Couples the redox reaction to proton translocation (for every two electrons transferred, four hydrogen ions are translocated across the cytoplasmic membrane), and thus conserves the redox energy in a proton gradient.</text>
</comment>
<comment type="catalytic activity">
    <reaction evidence="1">
        <text>a quinone + NADH + 5 H(+)(in) = a quinol + NAD(+) + 4 H(+)(out)</text>
        <dbReference type="Rhea" id="RHEA:57888"/>
        <dbReference type="ChEBI" id="CHEBI:15378"/>
        <dbReference type="ChEBI" id="CHEBI:24646"/>
        <dbReference type="ChEBI" id="CHEBI:57540"/>
        <dbReference type="ChEBI" id="CHEBI:57945"/>
        <dbReference type="ChEBI" id="CHEBI:132124"/>
    </reaction>
</comment>
<comment type="subunit">
    <text evidence="1">NDH-1 is composed of 14 different subunits. Subunits NuoA, H, J, K, L, M, N constitute the membrane sector of the complex.</text>
</comment>
<comment type="subcellular location">
    <subcellularLocation>
        <location evidence="1">Cell inner membrane</location>
        <topology evidence="1">Multi-pass membrane protein</topology>
    </subcellularLocation>
</comment>
<comment type="similarity">
    <text evidence="1">Belongs to the complex I subunit 3 family.</text>
</comment>
<sequence>MGDLIFPINPGAALAIHVALSAGIVAAIIVVAAWLREKRSGARADVPYEGGVLPAAPQQGPVNAPYFLIAALFVIFDMEAAILFAWAVAARDTGWLGLIEAAVFIGVLLLALVYLWADGALDWHKERRR</sequence>
<name>NUOA_RHOPS</name>
<dbReference type="EC" id="7.1.1.-" evidence="1"/>
<dbReference type="EMBL" id="CP000283">
    <property type="protein sequence ID" value="ABE38564.1"/>
    <property type="molecule type" value="Genomic_DNA"/>
</dbReference>
<dbReference type="SMR" id="Q13BH5"/>
<dbReference type="STRING" id="316057.RPD_1326"/>
<dbReference type="KEGG" id="rpd:RPD_1326"/>
<dbReference type="eggNOG" id="COG0838">
    <property type="taxonomic scope" value="Bacteria"/>
</dbReference>
<dbReference type="HOGENOM" id="CLU_119549_3_1_5"/>
<dbReference type="BioCyc" id="RPAL316057:RPD_RS06715-MONOMER"/>
<dbReference type="Proteomes" id="UP000001818">
    <property type="component" value="Chromosome"/>
</dbReference>
<dbReference type="GO" id="GO:0030964">
    <property type="term" value="C:NADH dehydrogenase complex"/>
    <property type="evidence" value="ECO:0007669"/>
    <property type="project" value="TreeGrafter"/>
</dbReference>
<dbReference type="GO" id="GO:0005886">
    <property type="term" value="C:plasma membrane"/>
    <property type="evidence" value="ECO:0007669"/>
    <property type="project" value="UniProtKB-SubCell"/>
</dbReference>
<dbReference type="GO" id="GO:0008137">
    <property type="term" value="F:NADH dehydrogenase (ubiquinone) activity"/>
    <property type="evidence" value="ECO:0007669"/>
    <property type="project" value="InterPro"/>
</dbReference>
<dbReference type="GO" id="GO:0050136">
    <property type="term" value="F:NADH:ubiquinone reductase (non-electrogenic) activity"/>
    <property type="evidence" value="ECO:0007669"/>
    <property type="project" value="UniProtKB-UniRule"/>
</dbReference>
<dbReference type="GO" id="GO:0048038">
    <property type="term" value="F:quinone binding"/>
    <property type="evidence" value="ECO:0007669"/>
    <property type="project" value="UniProtKB-KW"/>
</dbReference>
<dbReference type="Gene3D" id="1.20.58.1610">
    <property type="entry name" value="NADH:ubiquinone/plastoquinone oxidoreductase, chain 3"/>
    <property type="match status" value="1"/>
</dbReference>
<dbReference type="HAMAP" id="MF_01394">
    <property type="entry name" value="NDH1_NuoA"/>
    <property type="match status" value="1"/>
</dbReference>
<dbReference type="InterPro" id="IPR023043">
    <property type="entry name" value="NAD(P)H_OxRDtase_bac/plastid"/>
</dbReference>
<dbReference type="InterPro" id="IPR000440">
    <property type="entry name" value="NADH_UbQ/plastoQ_OxRdtase_su3"/>
</dbReference>
<dbReference type="InterPro" id="IPR038430">
    <property type="entry name" value="NDAH_ubi_oxred_su3_sf"/>
</dbReference>
<dbReference type="PANTHER" id="PTHR11058:SF21">
    <property type="entry name" value="NADH-QUINONE OXIDOREDUCTASE SUBUNIT A"/>
    <property type="match status" value="1"/>
</dbReference>
<dbReference type="PANTHER" id="PTHR11058">
    <property type="entry name" value="NADH-UBIQUINONE OXIDOREDUCTASE CHAIN 3"/>
    <property type="match status" value="1"/>
</dbReference>
<dbReference type="Pfam" id="PF00507">
    <property type="entry name" value="Oxidored_q4"/>
    <property type="match status" value="1"/>
</dbReference>
<gene>
    <name evidence="1" type="primary">nuoA</name>
    <name type="ordered locus">RPD_1326</name>
</gene>
<proteinExistence type="inferred from homology"/>